<dbReference type="EMBL" id="CP000282">
    <property type="protein sequence ID" value="ABD83270.1"/>
    <property type="molecule type" value="Genomic_DNA"/>
</dbReference>
<dbReference type="RefSeq" id="WP_011470485.1">
    <property type="nucleotide sequence ID" value="NC_007912.1"/>
</dbReference>
<dbReference type="STRING" id="203122.Sde_4015"/>
<dbReference type="GeneID" id="98615768"/>
<dbReference type="KEGG" id="sde:Sde_4015"/>
<dbReference type="eggNOG" id="COG0759">
    <property type="taxonomic scope" value="Bacteria"/>
</dbReference>
<dbReference type="HOGENOM" id="CLU_144811_6_0_6"/>
<dbReference type="OrthoDB" id="9801753at2"/>
<dbReference type="Proteomes" id="UP000001947">
    <property type="component" value="Chromosome"/>
</dbReference>
<dbReference type="GO" id="GO:0005886">
    <property type="term" value="C:plasma membrane"/>
    <property type="evidence" value="ECO:0007669"/>
    <property type="project" value="UniProtKB-SubCell"/>
</dbReference>
<dbReference type="HAMAP" id="MF_00386">
    <property type="entry name" value="UPF0161_YidD"/>
    <property type="match status" value="1"/>
</dbReference>
<dbReference type="InterPro" id="IPR002696">
    <property type="entry name" value="Membr_insert_effic_factor_YidD"/>
</dbReference>
<dbReference type="NCBIfam" id="TIGR00278">
    <property type="entry name" value="membrane protein insertion efficiency factor YidD"/>
    <property type="match status" value="1"/>
</dbReference>
<dbReference type="PANTHER" id="PTHR33383">
    <property type="entry name" value="MEMBRANE PROTEIN INSERTION EFFICIENCY FACTOR-RELATED"/>
    <property type="match status" value="1"/>
</dbReference>
<dbReference type="PANTHER" id="PTHR33383:SF1">
    <property type="entry name" value="MEMBRANE PROTEIN INSERTION EFFICIENCY FACTOR-RELATED"/>
    <property type="match status" value="1"/>
</dbReference>
<dbReference type="Pfam" id="PF01809">
    <property type="entry name" value="YidD"/>
    <property type="match status" value="1"/>
</dbReference>
<dbReference type="SMART" id="SM01234">
    <property type="entry name" value="Haemolytic"/>
    <property type="match status" value="1"/>
</dbReference>
<name>YIDD_SACD2</name>
<sequence length="91" mass="10258">MEACCKKSRKANSDPTRKNWLNLPLLALIKVYRYAISPLLGPRCRFEPTCSSYAEQALIEHGPFKGTMLALSRLSKCHPWHAGGYDPVPKK</sequence>
<comment type="function">
    <text evidence="1">Could be involved in insertion of integral membrane proteins into the membrane.</text>
</comment>
<comment type="subcellular location">
    <subcellularLocation>
        <location evidence="1">Cell inner membrane</location>
        <topology evidence="1">Peripheral membrane protein</topology>
        <orientation evidence="1">Cytoplasmic side</orientation>
    </subcellularLocation>
</comment>
<comment type="similarity">
    <text evidence="1">Belongs to the UPF0161 family.</text>
</comment>
<organism>
    <name type="scientific">Saccharophagus degradans (strain 2-40 / ATCC 43961 / DSM 17024)</name>
    <dbReference type="NCBI Taxonomy" id="203122"/>
    <lineage>
        <taxon>Bacteria</taxon>
        <taxon>Pseudomonadati</taxon>
        <taxon>Pseudomonadota</taxon>
        <taxon>Gammaproteobacteria</taxon>
        <taxon>Cellvibrionales</taxon>
        <taxon>Cellvibrionaceae</taxon>
        <taxon>Saccharophagus</taxon>
    </lineage>
</organism>
<accession>Q21DF9</accession>
<proteinExistence type="inferred from homology"/>
<keyword id="KW-0997">Cell inner membrane</keyword>
<keyword id="KW-1003">Cell membrane</keyword>
<keyword id="KW-0472">Membrane</keyword>
<keyword id="KW-1185">Reference proteome</keyword>
<protein>
    <recommendedName>
        <fullName evidence="1">Putative membrane protein insertion efficiency factor</fullName>
    </recommendedName>
</protein>
<gene>
    <name type="ordered locus">Sde_4015</name>
</gene>
<evidence type="ECO:0000255" key="1">
    <source>
        <dbReference type="HAMAP-Rule" id="MF_00386"/>
    </source>
</evidence>
<reference key="1">
    <citation type="journal article" date="2008" name="PLoS Genet.">
        <title>Complete genome sequence of the complex carbohydrate-degrading marine bacterium, Saccharophagus degradans strain 2-40 T.</title>
        <authorList>
            <person name="Weiner R.M."/>
            <person name="Taylor L.E. II"/>
            <person name="Henrissat B."/>
            <person name="Hauser L."/>
            <person name="Land M."/>
            <person name="Coutinho P.M."/>
            <person name="Rancurel C."/>
            <person name="Saunders E.H."/>
            <person name="Longmire A.G."/>
            <person name="Zhang H."/>
            <person name="Bayer E.A."/>
            <person name="Gilbert H.J."/>
            <person name="Larimer F."/>
            <person name="Zhulin I.B."/>
            <person name="Ekborg N.A."/>
            <person name="Lamed R."/>
            <person name="Richardson P.M."/>
            <person name="Borovok I."/>
            <person name="Hutcheson S."/>
        </authorList>
    </citation>
    <scope>NUCLEOTIDE SEQUENCE [LARGE SCALE GENOMIC DNA]</scope>
    <source>
        <strain>2-40 / ATCC 43961 / DSM 17024</strain>
    </source>
</reference>
<feature type="chain" id="PRO_0000253163" description="Putative membrane protein insertion efficiency factor">
    <location>
        <begin position="1"/>
        <end position="91"/>
    </location>
</feature>